<evidence type="ECO:0000250" key="1"/>
<evidence type="ECO:0000255" key="2"/>
<evidence type="ECO:0000256" key="3">
    <source>
        <dbReference type="SAM" id="MobiDB-lite"/>
    </source>
</evidence>
<evidence type="ECO:0000269" key="4">
    <source>
    </source>
</evidence>
<evidence type="ECO:0000269" key="5">
    <source>
    </source>
</evidence>
<evidence type="ECO:0000269" key="6">
    <source>
    </source>
</evidence>
<evidence type="ECO:0000305" key="7"/>
<evidence type="ECO:0007744" key="8">
    <source>
    </source>
</evidence>
<evidence type="ECO:0007744" key="9">
    <source>
    </source>
</evidence>
<comment type="function">
    <text evidence="4 5">Junctophilins contribute to the formation of junctional membrane complexes (JMCs) which link the plasma membrane with the endoplasmic or sarcoplasmic reticulum in excitable cells. Provides a structural foundation for functional cross-talk between the cell surface and intracellular calcium release channels. JPH3 is brain-specific and appears to have an active role in certain neurons involved in motor coordination and memory.</text>
</comment>
<comment type="subcellular location">
    <subcellularLocation>
        <location>Cell membrane</location>
        <topology>Peripheral membrane protein</topology>
    </subcellularLocation>
    <subcellularLocation>
        <location>Endoplasmic reticulum membrane</location>
        <topology>Single-pass type IV membrane protein</topology>
    </subcellularLocation>
    <text>Localized predominantly on the plasma membrane. The transmembrane domain is anchored in endoplasmic reticulum membrane, while the N-terminal part associates with the plasma membrane.</text>
</comment>
<comment type="tissue specificity">
    <text evidence="4 5">Specifically expressed in brain. Highest levels in the olfactory tubercle, caudate putamen, nucleus accumbens, hippocampal formation, piriform cortex and cerebellar cortex. Expressed in disctete neurons sites. In hippocampal formation, expressed in dendrites of hippocampal pyramidal and denate granule cells. In cerebellum, it is highly expressed in Purkinge cells, while it is weakly expressed in granular cells.</text>
</comment>
<comment type="domain">
    <text evidence="1">The MORN (membrane occupation and recognition nexus) repeats contribute to the plasma membrane binding, possibly by interacting with phospholipids.</text>
</comment>
<comment type="disruption phenotype">
    <text evidence="4 5 6">Mice are viable and fertile, but have defects in balance/motor coordination tasks. Jph3 and Jph4 double knockout mice exhibit atypical depolarizing responses, irregular cerebellar plasticity due to abolished crosstalk in Purkinje cells. There is hyperphosphorylation of PRKCG and mild impairment of synaptic maturation. Exploratory activity, hippocampal plasticity and memory are impaired and there is abnormal foot-clasping reflex.</text>
</comment>
<comment type="similarity">
    <text evidence="7">Belongs to the junctophilin family.</text>
</comment>
<comment type="sequence caution" evidence="7">
    <conflict type="erroneous termination">
        <sequence resource="EMBL-CDS" id="BAC38666"/>
    </conflict>
    <text>Extended C-terminus.</text>
</comment>
<accession>Q9ET77</accession>
<accession>Q3ZAS3</accession>
<accession>Q8BNM7</accession>
<accession>Q9EQZ2</accession>
<keyword id="KW-1003">Cell membrane</keyword>
<keyword id="KW-0256">Endoplasmic reticulum</keyword>
<keyword id="KW-0472">Membrane</keyword>
<keyword id="KW-0597">Phosphoprotein</keyword>
<keyword id="KW-1185">Reference proteome</keyword>
<keyword id="KW-0677">Repeat</keyword>
<keyword id="KW-0812">Transmembrane</keyword>
<keyword id="KW-1133">Transmembrane helix</keyword>
<proteinExistence type="evidence at protein level"/>
<sequence length="744" mass="81229">MSSGGRFNFDDGGSYCGGWEDGKAHGHGVCTGPKGQGEYTGSWSHGFEVLGVYTWPSGNTYQGTWAQGKRHGIGLESKGKWVYKGEWTHGFKGRYGVRECTGNGAKYEGTWSNGLQDGYGTETYSDGGTYQGQWVGGMRQGYGVRQSVPYGMAAVIRSPLRTSINSLRSEHTNGAALHPDASPAVAGSPAVSRGGFVLVAHSDSEILKSKKKGLFRRSLLSGLKLRKSESKSSLASQRSKQSSFRSEAGMSTVSSTASDIHSTISLGEAEAELAVIEDDIDATTTETYVGEWKNDKRSGFGVSQRSDGLKYEGEWVSNRRHGYGCMTFPDGTKEEGKYKQNVLVSGKRKNLIPLRASKIREKVDRAVEAAERAATIAKQKAEIAASRTSHSRAKAEAALTAAQKAQEEARIARITAKEFSPSFQHRENGLEYQRPKHQMSCDDIEVLSTGTPLQQESPELYRKGTTPSDLTPDDSPLQSFPASPTSTPPPAPASRTKMAHFSRQVSVDEERSGDIQMLLEGRGGDYARNSWGEEKAGASRGIRSGALRSGQPTEDFRTRGSGHKQPGNPKPRERRTESPTTFSWTSHHRAGNPCSGGPKLLEPDEEQLSNYKLEMKPLLRMDACPQDTHPQRRRHSRGAGGDRGFGLQRLRSKSQNKENLRPASSAEPTVQKLESLRLGDRPEPRLLRWDLTFSPPQKSLPVALESDEETGDELKSSTGSAPILVVMVILLNIGVAILFINFFI</sequence>
<organism>
    <name type="scientific">Mus musculus</name>
    <name type="common">Mouse</name>
    <dbReference type="NCBI Taxonomy" id="10090"/>
    <lineage>
        <taxon>Eukaryota</taxon>
        <taxon>Metazoa</taxon>
        <taxon>Chordata</taxon>
        <taxon>Craniata</taxon>
        <taxon>Vertebrata</taxon>
        <taxon>Euteleostomi</taxon>
        <taxon>Mammalia</taxon>
        <taxon>Eutheria</taxon>
        <taxon>Euarchontoglires</taxon>
        <taxon>Glires</taxon>
        <taxon>Rodentia</taxon>
        <taxon>Myomorpha</taxon>
        <taxon>Muroidea</taxon>
        <taxon>Muridae</taxon>
        <taxon>Murinae</taxon>
        <taxon>Mus</taxon>
        <taxon>Mus</taxon>
    </lineage>
</organism>
<gene>
    <name type="primary">Jph3</name>
    <name type="synonym">Jp3</name>
</gene>
<reference key="1">
    <citation type="journal article" date="2000" name="Mol. Cell">
        <title>Junctophilins: a novel family of junctional membrane complex proteins.</title>
        <authorList>
            <person name="Takeshima H."/>
            <person name="Komazaki S."/>
            <person name="Nishi M."/>
            <person name="Iino M."/>
            <person name="Kangawa K."/>
        </authorList>
    </citation>
    <scope>NUCLEOTIDE SEQUENCE [GENOMIC DNA / MRNA]</scope>
    <scope>SUBCELLULAR LOCATION</scope>
    <source>
        <strain>129</strain>
        <strain>C57BL/6J</strain>
        <tissue>Brain</tissue>
    </source>
</reference>
<reference key="2">
    <citation type="journal article" date="2005" name="Science">
        <title>The transcriptional landscape of the mammalian genome.</title>
        <authorList>
            <person name="Carninci P."/>
            <person name="Kasukawa T."/>
            <person name="Katayama S."/>
            <person name="Gough J."/>
            <person name="Frith M.C."/>
            <person name="Maeda N."/>
            <person name="Oyama R."/>
            <person name="Ravasi T."/>
            <person name="Lenhard B."/>
            <person name="Wells C."/>
            <person name="Kodzius R."/>
            <person name="Shimokawa K."/>
            <person name="Bajic V.B."/>
            <person name="Brenner S.E."/>
            <person name="Batalov S."/>
            <person name="Forrest A.R."/>
            <person name="Zavolan M."/>
            <person name="Davis M.J."/>
            <person name="Wilming L.G."/>
            <person name="Aidinis V."/>
            <person name="Allen J.E."/>
            <person name="Ambesi-Impiombato A."/>
            <person name="Apweiler R."/>
            <person name="Aturaliya R.N."/>
            <person name="Bailey T.L."/>
            <person name="Bansal M."/>
            <person name="Baxter L."/>
            <person name="Beisel K.W."/>
            <person name="Bersano T."/>
            <person name="Bono H."/>
            <person name="Chalk A.M."/>
            <person name="Chiu K.P."/>
            <person name="Choudhary V."/>
            <person name="Christoffels A."/>
            <person name="Clutterbuck D.R."/>
            <person name="Crowe M.L."/>
            <person name="Dalla E."/>
            <person name="Dalrymple B.P."/>
            <person name="de Bono B."/>
            <person name="Della Gatta G."/>
            <person name="di Bernardo D."/>
            <person name="Down T."/>
            <person name="Engstrom P."/>
            <person name="Fagiolini M."/>
            <person name="Faulkner G."/>
            <person name="Fletcher C.F."/>
            <person name="Fukushima T."/>
            <person name="Furuno M."/>
            <person name="Futaki S."/>
            <person name="Gariboldi M."/>
            <person name="Georgii-Hemming P."/>
            <person name="Gingeras T.R."/>
            <person name="Gojobori T."/>
            <person name="Green R.E."/>
            <person name="Gustincich S."/>
            <person name="Harbers M."/>
            <person name="Hayashi Y."/>
            <person name="Hensch T.K."/>
            <person name="Hirokawa N."/>
            <person name="Hill D."/>
            <person name="Huminiecki L."/>
            <person name="Iacono M."/>
            <person name="Ikeo K."/>
            <person name="Iwama A."/>
            <person name="Ishikawa T."/>
            <person name="Jakt M."/>
            <person name="Kanapin A."/>
            <person name="Katoh M."/>
            <person name="Kawasawa Y."/>
            <person name="Kelso J."/>
            <person name="Kitamura H."/>
            <person name="Kitano H."/>
            <person name="Kollias G."/>
            <person name="Krishnan S.P."/>
            <person name="Kruger A."/>
            <person name="Kummerfeld S.K."/>
            <person name="Kurochkin I.V."/>
            <person name="Lareau L.F."/>
            <person name="Lazarevic D."/>
            <person name="Lipovich L."/>
            <person name="Liu J."/>
            <person name="Liuni S."/>
            <person name="McWilliam S."/>
            <person name="Madan Babu M."/>
            <person name="Madera M."/>
            <person name="Marchionni L."/>
            <person name="Matsuda H."/>
            <person name="Matsuzawa S."/>
            <person name="Miki H."/>
            <person name="Mignone F."/>
            <person name="Miyake S."/>
            <person name="Morris K."/>
            <person name="Mottagui-Tabar S."/>
            <person name="Mulder N."/>
            <person name="Nakano N."/>
            <person name="Nakauchi H."/>
            <person name="Ng P."/>
            <person name="Nilsson R."/>
            <person name="Nishiguchi S."/>
            <person name="Nishikawa S."/>
            <person name="Nori F."/>
            <person name="Ohara O."/>
            <person name="Okazaki Y."/>
            <person name="Orlando V."/>
            <person name="Pang K.C."/>
            <person name="Pavan W.J."/>
            <person name="Pavesi G."/>
            <person name="Pesole G."/>
            <person name="Petrovsky N."/>
            <person name="Piazza S."/>
            <person name="Reed J."/>
            <person name="Reid J.F."/>
            <person name="Ring B.Z."/>
            <person name="Ringwald M."/>
            <person name="Rost B."/>
            <person name="Ruan Y."/>
            <person name="Salzberg S.L."/>
            <person name="Sandelin A."/>
            <person name="Schneider C."/>
            <person name="Schoenbach C."/>
            <person name="Sekiguchi K."/>
            <person name="Semple C.A."/>
            <person name="Seno S."/>
            <person name="Sessa L."/>
            <person name="Sheng Y."/>
            <person name="Shibata Y."/>
            <person name="Shimada H."/>
            <person name="Shimada K."/>
            <person name="Silva D."/>
            <person name="Sinclair B."/>
            <person name="Sperling S."/>
            <person name="Stupka E."/>
            <person name="Sugiura K."/>
            <person name="Sultana R."/>
            <person name="Takenaka Y."/>
            <person name="Taki K."/>
            <person name="Tammoja K."/>
            <person name="Tan S.L."/>
            <person name="Tang S."/>
            <person name="Taylor M.S."/>
            <person name="Tegner J."/>
            <person name="Teichmann S.A."/>
            <person name="Ueda H.R."/>
            <person name="van Nimwegen E."/>
            <person name="Verardo R."/>
            <person name="Wei C.L."/>
            <person name="Yagi K."/>
            <person name="Yamanishi H."/>
            <person name="Zabarovsky E."/>
            <person name="Zhu S."/>
            <person name="Zimmer A."/>
            <person name="Hide W."/>
            <person name="Bult C."/>
            <person name="Grimmond S.M."/>
            <person name="Teasdale R.D."/>
            <person name="Liu E.T."/>
            <person name="Brusic V."/>
            <person name="Quackenbush J."/>
            <person name="Wahlestedt C."/>
            <person name="Mattick J.S."/>
            <person name="Hume D.A."/>
            <person name="Kai C."/>
            <person name="Sasaki D."/>
            <person name="Tomaru Y."/>
            <person name="Fukuda S."/>
            <person name="Kanamori-Katayama M."/>
            <person name="Suzuki M."/>
            <person name="Aoki J."/>
            <person name="Arakawa T."/>
            <person name="Iida J."/>
            <person name="Imamura K."/>
            <person name="Itoh M."/>
            <person name="Kato T."/>
            <person name="Kawaji H."/>
            <person name="Kawagashira N."/>
            <person name="Kawashima T."/>
            <person name="Kojima M."/>
            <person name="Kondo S."/>
            <person name="Konno H."/>
            <person name="Nakano K."/>
            <person name="Ninomiya N."/>
            <person name="Nishio T."/>
            <person name="Okada M."/>
            <person name="Plessy C."/>
            <person name="Shibata K."/>
            <person name="Shiraki T."/>
            <person name="Suzuki S."/>
            <person name="Tagami M."/>
            <person name="Waki K."/>
            <person name="Watahiki A."/>
            <person name="Okamura-Oho Y."/>
            <person name="Suzuki H."/>
            <person name="Kawai J."/>
            <person name="Hayashizaki Y."/>
        </authorList>
    </citation>
    <scope>NUCLEOTIDE SEQUENCE [LARGE SCALE MRNA]</scope>
    <source>
        <strain>C57BL/6J</strain>
    </source>
</reference>
<reference key="3">
    <citation type="journal article" date="2004" name="Genome Res.">
        <title>The status, quality, and expansion of the NIH full-length cDNA project: the Mammalian Gene Collection (MGC).</title>
        <authorList>
            <consortium name="The MGC Project Team"/>
        </authorList>
    </citation>
    <scope>NUCLEOTIDE SEQUENCE [LARGE SCALE MRNA]</scope>
</reference>
<reference key="4">
    <citation type="journal article" date="2002" name="Biochem. Biophys. Res. Commun.">
        <title>Motor discoordination in mutant mice lacking junctophilin type 3.</title>
        <authorList>
            <person name="Nishi M."/>
            <person name="Hashimoto K."/>
            <person name="Kuriyama K."/>
            <person name="Komazaki S."/>
            <person name="Kano M."/>
            <person name="Shibata S."/>
            <person name="Takeshima H."/>
        </authorList>
    </citation>
    <scope>FUNCTION</scope>
    <scope>TISSUE SPECIFICITY</scope>
    <scope>DISRUPTION PHENOTYPE</scope>
</reference>
<reference key="5">
    <citation type="journal article" date="2006" name="Mol. Cell. Proteomics">
        <title>Comprehensive identification of phosphorylation sites in postsynaptic density preparations.</title>
        <authorList>
            <person name="Trinidad J.C."/>
            <person name="Specht C.G."/>
            <person name="Thalhammer A."/>
            <person name="Schoepfer R."/>
            <person name="Burlingame A.L."/>
        </authorList>
    </citation>
    <scope>PHOSPHORYLATION [LARGE SCALE ANALYSIS] AT SER-506</scope>
    <scope>IDENTIFICATION BY MASS SPECTROMETRY [LARGE SCALE ANALYSIS]</scope>
    <source>
        <tissue>Brain</tissue>
    </source>
</reference>
<reference key="6">
    <citation type="journal article" date="2006" name="Proc. Natl. Acad. Sci. U.S.A.">
        <title>Functional uncoupling between Ca2+ release and afterhyperpolarization in mutant hippocampal neurons lacking junctophilins.</title>
        <authorList>
            <person name="Moriguchi S."/>
            <person name="Nishi M."/>
            <person name="Komazaki S."/>
            <person name="Sakagami H."/>
            <person name="Miyazaki T."/>
            <person name="Masumiya H."/>
            <person name="Saito S.Y."/>
            <person name="Watanabe M."/>
            <person name="Kondo H."/>
            <person name="Yawo H."/>
            <person name="Fukunaga K."/>
            <person name="Takeshima H."/>
        </authorList>
    </citation>
    <scope>DISRUPTION PHENOTYPE</scope>
    <scope>FUNCTION</scope>
    <scope>TISSUE SPECIFICITY</scope>
    <scope>SUBCELLULAR LOCATION</scope>
</reference>
<reference key="7">
    <citation type="journal article" date="2007" name="Biochem. Biophys. Res. Commun.">
        <title>Abnormal features in mutant cerebellar Purkinje cells lacking junctophilins.</title>
        <authorList>
            <person name="Ikeda A."/>
            <person name="Miyazaki T."/>
            <person name="Kakizawa S."/>
            <person name="Okuno Y."/>
            <person name="Tsuchiya S."/>
            <person name="Myomoto A."/>
            <person name="Saito S.Y."/>
            <person name="Yamamoto T."/>
            <person name="Yamazaki T."/>
            <person name="Iino M."/>
            <person name="Tsujimoto G."/>
            <person name="Watanabe M."/>
            <person name="Takeshima H."/>
        </authorList>
    </citation>
    <scope>DISRUPTION PHENOTYPE</scope>
</reference>
<reference key="8">
    <citation type="journal article" date="2010" name="Cell">
        <title>A tissue-specific atlas of mouse protein phosphorylation and expression.</title>
        <authorList>
            <person name="Huttlin E.L."/>
            <person name="Jedrychowski M.P."/>
            <person name="Elias J.E."/>
            <person name="Goswami T."/>
            <person name="Rad R."/>
            <person name="Beausoleil S.A."/>
            <person name="Villen J."/>
            <person name="Haas W."/>
            <person name="Sowa M.E."/>
            <person name="Gygi S.P."/>
        </authorList>
    </citation>
    <scope>PHOSPHORYLATION [LARGE SCALE ANALYSIS] AT SER-440; THR-451; SER-457; THR-471; SER-475; SER-699 AND SER-706</scope>
    <scope>IDENTIFICATION BY MASS SPECTROMETRY [LARGE SCALE ANALYSIS]</scope>
    <source>
        <tissue>Brain</tissue>
    </source>
</reference>
<feature type="chain" id="PRO_0000159851" description="Junctophilin-3">
    <location>
        <begin position="1"/>
        <end position="744"/>
    </location>
</feature>
<feature type="topological domain" description="Cytoplasmic" evidence="2">
    <location>
        <begin position="1"/>
        <end position="723"/>
    </location>
</feature>
<feature type="transmembrane region" description="Helical; Anchor for type IV membrane protein" evidence="2">
    <location>
        <begin position="724"/>
        <end position="744"/>
    </location>
</feature>
<feature type="repeat" description="MORN 1">
    <location>
        <begin position="15"/>
        <end position="37"/>
    </location>
</feature>
<feature type="repeat" description="MORN 2">
    <location>
        <begin position="39"/>
        <end position="60"/>
    </location>
</feature>
<feature type="repeat" description="MORN 3">
    <location>
        <begin position="61"/>
        <end position="82"/>
    </location>
</feature>
<feature type="repeat" description="MORN 4">
    <location>
        <begin position="83"/>
        <end position="105"/>
    </location>
</feature>
<feature type="repeat" description="MORN 5">
    <location>
        <begin position="107"/>
        <end position="129"/>
    </location>
</feature>
<feature type="repeat" description="MORN 6">
    <location>
        <begin position="130"/>
        <end position="152"/>
    </location>
</feature>
<feature type="repeat" description="MORN 7">
    <location>
        <begin position="288"/>
        <end position="310"/>
    </location>
</feature>
<feature type="repeat" description="MORN 8">
    <location>
        <begin position="311"/>
        <end position="333"/>
    </location>
</feature>
<feature type="region of interest" description="Disordered" evidence="3">
    <location>
        <begin position="230"/>
        <end position="252"/>
    </location>
</feature>
<feature type="region of interest" description="Disordered" evidence="3">
    <location>
        <begin position="451"/>
        <end position="603"/>
    </location>
</feature>
<feature type="region of interest" description="Disordered" evidence="3">
    <location>
        <begin position="624"/>
        <end position="677"/>
    </location>
</feature>
<feature type="compositionally biased region" description="Low complexity" evidence="3">
    <location>
        <begin position="231"/>
        <end position="244"/>
    </location>
</feature>
<feature type="modified residue" description="Phosphoserine" evidence="9">
    <location>
        <position position="440"/>
    </location>
</feature>
<feature type="modified residue" description="Phosphothreonine" evidence="9">
    <location>
        <position position="451"/>
    </location>
</feature>
<feature type="modified residue" description="Phosphoserine" evidence="9">
    <location>
        <position position="457"/>
    </location>
</feature>
<feature type="modified residue" description="Phosphothreonine" evidence="9">
    <location>
        <position position="471"/>
    </location>
</feature>
<feature type="modified residue" description="Phosphoserine" evidence="9">
    <location>
        <position position="475"/>
    </location>
</feature>
<feature type="modified residue" description="Phosphoserine" evidence="8">
    <location>
        <position position="506"/>
    </location>
</feature>
<feature type="modified residue" description="Phosphoserine" evidence="9">
    <location>
        <position position="699"/>
    </location>
</feature>
<feature type="modified residue" description="Phosphoserine" evidence="9">
    <location>
        <position position="706"/>
    </location>
</feature>
<protein>
    <recommendedName>
        <fullName>Junctophilin-3</fullName>
        <shortName>JP-3</shortName>
    </recommendedName>
    <alternativeName>
        <fullName>Junctophilin type 3</fullName>
    </alternativeName>
</protein>
<name>JPH3_MOUSE</name>
<dbReference type="EMBL" id="AB024449">
    <property type="protein sequence ID" value="BAB12046.1"/>
    <property type="molecule type" value="mRNA"/>
</dbReference>
<dbReference type="EMBL" id="AB024450">
    <property type="protein sequence ID" value="BAB20320.1"/>
    <property type="molecule type" value="Genomic_DNA"/>
</dbReference>
<dbReference type="EMBL" id="AK082880">
    <property type="protein sequence ID" value="BAC38666.1"/>
    <property type="status" value="ALT_SEQ"/>
    <property type="molecule type" value="mRNA"/>
</dbReference>
<dbReference type="EMBL" id="BC103682">
    <property type="protein sequence ID" value="AAI03683.1"/>
    <property type="molecule type" value="mRNA"/>
</dbReference>
<dbReference type="EMBL" id="BC104736">
    <property type="protein sequence ID" value="AAI04737.1"/>
    <property type="molecule type" value="mRNA"/>
</dbReference>
<dbReference type="EMBL" id="BC105307">
    <property type="protein sequence ID" value="AAI05308.1"/>
    <property type="molecule type" value="mRNA"/>
</dbReference>
<dbReference type="CCDS" id="CCDS22728.1"/>
<dbReference type="RefSeq" id="NP_065630.1">
    <property type="nucleotide sequence ID" value="NM_020605.3"/>
</dbReference>
<dbReference type="SMR" id="Q9ET77"/>
<dbReference type="BioGRID" id="208262">
    <property type="interactions" value="4"/>
</dbReference>
<dbReference type="FunCoup" id="Q9ET77">
    <property type="interactions" value="804"/>
</dbReference>
<dbReference type="STRING" id="10090.ENSMUSP00000026357"/>
<dbReference type="iPTMnet" id="Q9ET77"/>
<dbReference type="PhosphoSitePlus" id="Q9ET77"/>
<dbReference type="PaxDb" id="10090-ENSMUSP00000026357"/>
<dbReference type="ProteomicsDB" id="269035"/>
<dbReference type="Antibodypedia" id="17225">
    <property type="antibodies" value="180 antibodies from 25 providers"/>
</dbReference>
<dbReference type="DNASU" id="57340"/>
<dbReference type="Ensembl" id="ENSMUST00000026357.12">
    <property type="protein sequence ID" value="ENSMUSP00000026357.6"/>
    <property type="gene ID" value="ENSMUSG00000025318.14"/>
</dbReference>
<dbReference type="Ensembl" id="ENSMUST00000167439.2">
    <property type="protein sequence ID" value="ENSMUSP00000126190.2"/>
    <property type="gene ID" value="ENSMUSG00000025318.14"/>
</dbReference>
<dbReference type="GeneID" id="57340"/>
<dbReference type="KEGG" id="mmu:57340"/>
<dbReference type="UCSC" id="uc009nrz.2">
    <property type="organism name" value="mouse"/>
</dbReference>
<dbReference type="AGR" id="MGI:1891497"/>
<dbReference type="CTD" id="57338"/>
<dbReference type="MGI" id="MGI:1891497">
    <property type="gene designation" value="Jph3"/>
</dbReference>
<dbReference type="VEuPathDB" id="HostDB:ENSMUSG00000025318"/>
<dbReference type="eggNOG" id="KOG0231">
    <property type="taxonomic scope" value="Eukaryota"/>
</dbReference>
<dbReference type="GeneTree" id="ENSGT00940000158707"/>
<dbReference type="HOGENOM" id="CLU_008078_2_0_1"/>
<dbReference type="InParanoid" id="Q9ET77"/>
<dbReference type="OMA" id="RHYSKAG"/>
<dbReference type="OrthoDB" id="284854at2759"/>
<dbReference type="PhylomeDB" id="Q9ET77"/>
<dbReference type="TreeFam" id="TF317210"/>
<dbReference type="BioGRID-ORCS" id="57340">
    <property type="hits" value="2 hits in 79 CRISPR screens"/>
</dbReference>
<dbReference type="CD-CODE" id="CE726F99">
    <property type="entry name" value="Postsynaptic density"/>
</dbReference>
<dbReference type="PRO" id="PR:Q9ET77"/>
<dbReference type="Proteomes" id="UP000000589">
    <property type="component" value="Chromosome 8"/>
</dbReference>
<dbReference type="RNAct" id="Q9ET77">
    <property type="molecule type" value="protein"/>
</dbReference>
<dbReference type="Bgee" id="ENSMUSG00000025318">
    <property type="expression patterns" value="Expressed in CA3 field of hippocampus and 101 other cell types or tissues"/>
</dbReference>
<dbReference type="GO" id="GO:0005783">
    <property type="term" value="C:endoplasmic reticulum"/>
    <property type="evidence" value="ECO:0000314"/>
    <property type="project" value="UniProtKB"/>
</dbReference>
<dbReference type="GO" id="GO:0005789">
    <property type="term" value="C:endoplasmic reticulum membrane"/>
    <property type="evidence" value="ECO:0000314"/>
    <property type="project" value="UniProtKB"/>
</dbReference>
<dbReference type="GO" id="GO:0030314">
    <property type="term" value="C:junctional membrane complex"/>
    <property type="evidence" value="ECO:0000314"/>
    <property type="project" value="UniProtKB"/>
</dbReference>
<dbReference type="GO" id="GO:0016020">
    <property type="term" value="C:membrane"/>
    <property type="evidence" value="ECO:0000304"/>
    <property type="project" value="MGI"/>
</dbReference>
<dbReference type="GO" id="GO:0005886">
    <property type="term" value="C:plasma membrane"/>
    <property type="evidence" value="ECO:0000314"/>
    <property type="project" value="UniProtKB"/>
</dbReference>
<dbReference type="GO" id="GO:0035640">
    <property type="term" value="P:exploration behavior"/>
    <property type="evidence" value="ECO:0000315"/>
    <property type="project" value="UniProtKB"/>
</dbReference>
<dbReference type="GO" id="GO:0007612">
    <property type="term" value="P:learning"/>
    <property type="evidence" value="ECO:0000316"/>
    <property type="project" value="MGI"/>
</dbReference>
<dbReference type="GO" id="GO:0040011">
    <property type="term" value="P:locomotion"/>
    <property type="evidence" value="ECO:0000315"/>
    <property type="project" value="MGI"/>
</dbReference>
<dbReference type="GO" id="GO:0007613">
    <property type="term" value="P:memory"/>
    <property type="evidence" value="ECO:0000315"/>
    <property type="project" value="UniProtKB"/>
</dbReference>
<dbReference type="GO" id="GO:0050885">
    <property type="term" value="P:neuromuscular process controlling balance"/>
    <property type="evidence" value="ECO:0000316"/>
    <property type="project" value="MGI"/>
</dbReference>
<dbReference type="GO" id="GO:0048168">
    <property type="term" value="P:regulation of neuronal synaptic plasticity"/>
    <property type="evidence" value="ECO:0000315"/>
    <property type="project" value="UniProtKB"/>
</dbReference>
<dbReference type="GO" id="GO:0060314">
    <property type="term" value="P:regulation of ryanodine-sensitive calcium-release channel activity"/>
    <property type="evidence" value="ECO:0000315"/>
    <property type="project" value="UniProtKB"/>
</dbReference>
<dbReference type="FunFam" id="2.20.110.10:FF:000001">
    <property type="entry name" value="Junctophilin"/>
    <property type="match status" value="1"/>
</dbReference>
<dbReference type="FunFam" id="2.20.110.10:FF:000003">
    <property type="entry name" value="Junctophilin"/>
    <property type="match status" value="1"/>
</dbReference>
<dbReference type="FunFam" id="2.20.110.10:FF:000012">
    <property type="entry name" value="Junctophilin"/>
    <property type="match status" value="1"/>
</dbReference>
<dbReference type="Gene3D" id="2.20.110.10">
    <property type="entry name" value="Histone H3 K4-specific methyltransferase SET7/9 N-terminal domain"/>
    <property type="match status" value="3"/>
</dbReference>
<dbReference type="InterPro" id="IPR017191">
    <property type="entry name" value="Junctophilin"/>
</dbReference>
<dbReference type="InterPro" id="IPR003409">
    <property type="entry name" value="MORN"/>
</dbReference>
<dbReference type="PANTHER" id="PTHR23085">
    <property type="entry name" value="GH28348P"/>
    <property type="match status" value="1"/>
</dbReference>
<dbReference type="PANTHER" id="PTHR23085:SF7">
    <property type="entry name" value="JUNCTOPHILIN-3"/>
    <property type="match status" value="1"/>
</dbReference>
<dbReference type="Pfam" id="PF02493">
    <property type="entry name" value="MORN"/>
    <property type="match status" value="7"/>
</dbReference>
<dbReference type="PIRSF" id="PIRSF037387">
    <property type="entry name" value="Junctophilin"/>
    <property type="match status" value="1"/>
</dbReference>
<dbReference type="SMART" id="SM00698">
    <property type="entry name" value="MORN"/>
    <property type="match status" value="7"/>
</dbReference>
<dbReference type="SUPFAM" id="SSF82185">
    <property type="entry name" value="Histone H3 K4-specific methyltransferase SET7/9 N-terminal domain"/>
    <property type="match status" value="2"/>
</dbReference>